<protein>
    <recommendedName>
        <fullName>ATP-dependent RNA helicase DDX25</fullName>
        <ecNumber>3.6.4.13</ecNumber>
    </recommendedName>
    <alternativeName>
        <fullName>DEAD box protein 25</fullName>
    </alternativeName>
    <alternativeName>
        <fullName>RNA helicase DEADSouth</fullName>
    </alternativeName>
    <alternativeName>
        <fullName>Xcat3</fullName>
    </alternativeName>
</protein>
<evidence type="ECO:0000250" key="1">
    <source>
        <dbReference type="UniProtKB" id="Q9QY15"/>
    </source>
</evidence>
<evidence type="ECO:0000255" key="2"/>
<evidence type="ECO:0000255" key="3">
    <source>
        <dbReference type="PROSITE-ProRule" id="PRU00541"/>
    </source>
</evidence>
<evidence type="ECO:0000255" key="4">
    <source>
        <dbReference type="PROSITE-ProRule" id="PRU00542"/>
    </source>
</evidence>
<evidence type="ECO:0000269" key="5">
    <source>
    </source>
</evidence>
<evidence type="ECO:0000269" key="6">
    <source>
    </source>
</evidence>
<evidence type="ECO:0000305" key="7"/>
<evidence type="ECO:0000312" key="8">
    <source>
        <dbReference type="EMBL" id="AAF99574.1"/>
    </source>
</evidence>
<proteinExistence type="evidence at transcript level"/>
<keyword id="KW-0067">ATP-binding</keyword>
<keyword id="KW-0963">Cytoplasm</keyword>
<keyword id="KW-0347">Helicase</keyword>
<keyword id="KW-0378">Hydrolase</keyword>
<keyword id="KW-0547">Nucleotide-binding</keyword>
<keyword id="KW-0539">Nucleus</keyword>
<keyword id="KW-1185">Reference proteome</keyword>
<keyword id="KW-0694">RNA-binding</keyword>
<gene>
    <name evidence="8" type="primary">deadsouth</name>
</gene>
<dbReference type="EC" id="3.6.4.13"/>
<dbReference type="EMBL" id="AF190623">
    <property type="protein sequence ID" value="AAF99574.1"/>
    <property type="molecule type" value="mRNA"/>
</dbReference>
<dbReference type="RefSeq" id="NP_001082017.1">
    <property type="nucleotide sequence ID" value="NM_001088548.1"/>
</dbReference>
<dbReference type="SMR" id="Q9DGP9"/>
<dbReference type="GeneID" id="398180"/>
<dbReference type="KEGG" id="xla:398180"/>
<dbReference type="AGR" id="Xenbase:XB-GENE-958142"/>
<dbReference type="CTD" id="398180"/>
<dbReference type="Xenbase" id="XB-GENE-958142">
    <property type="gene designation" value="ddx25.L"/>
</dbReference>
<dbReference type="OMA" id="DFKNLCM"/>
<dbReference type="OrthoDB" id="10265785at2759"/>
<dbReference type="Proteomes" id="UP000186698">
    <property type="component" value="Chromosome 7L"/>
</dbReference>
<dbReference type="Bgee" id="398180">
    <property type="expression patterns" value="Expressed in egg cell and 7 other cell types or tissues"/>
</dbReference>
<dbReference type="GO" id="GO:0033391">
    <property type="term" value="C:chromatoid body"/>
    <property type="evidence" value="ECO:0000250"/>
    <property type="project" value="UniProtKB"/>
</dbReference>
<dbReference type="GO" id="GO:0010494">
    <property type="term" value="C:cytoplasmic stress granule"/>
    <property type="evidence" value="ECO:0000318"/>
    <property type="project" value="GO_Central"/>
</dbReference>
<dbReference type="GO" id="GO:0032019">
    <property type="term" value="C:mitochondrial cloud"/>
    <property type="evidence" value="ECO:0000314"/>
    <property type="project" value="UniProtKB"/>
</dbReference>
<dbReference type="GO" id="GO:0005634">
    <property type="term" value="C:nucleus"/>
    <property type="evidence" value="ECO:0000318"/>
    <property type="project" value="GO_Central"/>
</dbReference>
<dbReference type="GO" id="GO:0045495">
    <property type="term" value="C:pole plasm"/>
    <property type="evidence" value="ECO:0000314"/>
    <property type="project" value="UniProtKB"/>
</dbReference>
<dbReference type="GO" id="GO:0005524">
    <property type="term" value="F:ATP binding"/>
    <property type="evidence" value="ECO:0007669"/>
    <property type="project" value="UniProtKB-KW"/>
</dbReference>
<dbReference type="GO" id="GO:0016887">
    <property type="term" value="F:ATP hydrolysis activity"/>
    <property type="evidence" value="ECO:0000250"/>
    <property type="project" value="UniProtKB"/>
</dbReference>
<dbReference type="GO" id="GO:0003729">
    <property type="term" value="F:mRNA binding"/>
    <property type="evidence" value="ECO:0000318"/>
    <property type="project" value="GO_Central"/>
</dbReference>
<dbReference type="GO" id="GO:0003723">
    <property type="term" value="F:RNA binding"/>
    <property type="evidence" value="ECO:0000250"/>
    <property type="project" value="UniProtKB"/>
</dbReference>
<dbReference type="GO" id="GO:0003724">
    <property type="term" value="F:RNA helicase activity"/>
    <property type="evidence" value="ECO:0000250"/>
    <property type="project" value="UniProtKB"/>
</dbReference>
<dbReference type="GO" id="GO:0016973">
    <property type="term" value="P:poly(A)+ mRNA export from nucleus"/>
    <property type="evidence" value="ECO:0000318"/>
    <property type="project" value="GO_Central"/>
</dbReference>
<dbReference type="CDD" id="cd18048">
    <property type="entry name" value="DEADc_DDX25"/>
    <property type="match status" value="1"/>
</dbReference>
<dbReference type="CDD" id="cd18787">
    <property type="entry name" value="SF2_C_DEAD"/>
    <property type="match status" value="1"/>
</dbReference>
<dbReference type="FunFam" id="3.40.50.300:FF:000849">
    <property type="entry name" value="ATP-dependent RNA helicase DBP5"/>
    <property type="match status" value="1"/>
</dbReference>
<dbReference type="FunFam" id="3.40.50.300:FF:000318">
    <property type="entry name" value="ATP-dependent RNA helicase DDX19B"/>
    <property type="match status" value="1"/>
</dbReference>
<dbReference type="Gene3D" id="6.10.250.2170">
    <property type="match status" value="1"/>
</dbReference>
<dbReference type="Gene3D" id="3.40.50.300">
    <property type="entry name" value="P-loop containing nucleotide triphosphate hydrolases"/>
    <property type="match status" value="2"/>
</dbReference>
<dbReference type="InterPro" id="IPR011545">
    <property type="entry name" value="DEAD/DEAH_box_helicase_dom"/>
</dbReference>
<dbReference type="InterPro" id="IPR014001">
    <property type="entry name" value="Helicase_ATP-bd"/>
</dbReference>
<dbReference type="InterPro" id="IPR001650">
    <property type="entry name" value="Helicase_C-like"/>
</dbReference>
<dbReference type="InterPro" id="IPR027417">
    <property type="entry name" value="P-loop_NTPase"/>
</dbReference>
<dbReference type="InterPro" id="IPR014014">
    <property type="entry name" value="RNA_helicase_DEAD_Q_motif"/>
</dbReference>
<dbReference type="PANTHER" id="PTHR47958">
    <property type="entry name" value="ATP-DEPENDENT RNA HELICASE DBP3"/>
    <property type="match status" value="1"/>
</dbReference>
<dbReference type="Pfam" id="PF00270">
    <property type="entry name" value="DEAD"/>
    <property type="match status" value="1"/>
</dbReference>
<dbReference type="Pfam" id="PF00271">
    <property type="entry name" value="Helicase_C"/>
    <property type="match status" value="1"/>
</dbReference>
<dbReference type="SMART" id="SM00487">
    <property type="entry name" value="DEXDc"/>
    <property type="match status" value="1"/>
</dbReference>
<dbReference type="SMART" id="SM00490">
    <property type="entry name" value="HELICc"/>
    <property type="match status" value="1"/>
</dbReference>
<dbReference type="SUPFAM" id="SSF52540">
    <property type="entry name" value="P-loop containing nucleoside triphosphate hydrolases"/>
    <property type="match status" value="1"/>
</dbReference>
<dbReference type="PROSITE" id="PS51192">
    <property type="entry name" value="HELICASE_ATP_BIND_1"/>
    <property type="match status" value="1"/>
</dbReference>
<dbReference type="PROSITE" id="PS51194">
    <property type="entry name" value="HELICASE_CTER"/>
    <property type="match status" value="1"/>
</dbReference>
<dbReference type="PROSITE" id="PS51195">
    <property type="entry name" value="Q_MOTIF"/>
    <property type="match status" value="1"/>
</dbReference>
<reference evidence="7 8" key="1">
    <citation type="journal article" date="2000" name="Mech. Dev.">
        <title>DEADSouth is a germ plasm specific DEAD-box RNA helicase in Xenopus related to eIF4A.</title>
        <authorList>
            <person name="MacArthur H.C."/>
            <person name="Houston D.W."/>
            <person name="Bubunenko M."/>
            <person name="Mosquera L."/>
            <person name="King M.L."/>
        </authorList>
    </citation>
    <scope>NUCLEOTIDE SEQUENCE [MRNA]</scope>
    <scope>SUBCELLULAR LOCATION</scope>
    <scope>TISSUE SPECIFICITY</scope>
    <scope>DEVELOPMENTAL STAGE</scope>
    <source>
        <tissue evidence="5">Oocyte</tissue>
    </source>
</reference>
<reference evidence="7" key="2">
    <citation type="journal article" date="2002" name="Dev. Biol.">
        <title>Three-dimensional ultrastructural analysis of RNA distribution within germinal granules of Xenopus.</title>
        <authorList>
            <person name="Kloc M."/>
            <person name="Dougherty M.T."/>
            <person name="Bilinski S."/>
            <person name="Chan A.P."/>
            <person name="Brey E."/>
            <person name="King M.L."/>
            <person name="Patrick C.W. Jr."/>
            <person name="Etkin L.D."/>
        </authorList>
    </citation>
    <scope>SUBCELLULAR LOCATION</scope>
    <scope>TISSUE SPECIFICITY</scope>
</reference>
<organism>
    <name type="scientific">Xenopus laevis</name>
    <name type="common">African clawed frog</name>
    <dbReference type="NCBI Taxonomy" id="8355"/>
    <lineage>
        <taxon>Eukaryota</taxon>
        <taxon>Metazoa</taxon>
        <taxon>Chordata</taxon>
        <taxon>Craniata</taxon>
        <taxon>Vertebrata</taxon>
        <taxon>Euteleostomi</taxon>
        <taxon>Amphibia</taxon>
        <taxon>Batrachia</taxon>
        <taxon>Anura</taxon>
        <taxon>Pipoidea</taxon>
        <taxon>Pipidae</taxon>
        <taxon>Xenopodinae</taxon>
        <taxon>Xenopus</taxon>
        <taxon>Xenopus</taxon>
    </lineage>
</organism>
<name>DDX25_XENLA</name>
<comment type="function">
    <text evidence="1">ATP-dependent RNA helicase.</text>
</comment>
<comment type="catalytic activity">
    <reaction>
        <text>ATP + H2O = ADP + phosphate + H(+)</text>
        <dbReference type="Rhea" id="RHEA:13065"/>
        <dbReference type="ChEBI" id="CHEBI:15377"/>
        <dbReference type="ChEBI" id="CHEBI:15378"/>
        <dbReference type="ChEBI" id="CHEBI:30616"/>
        <dbReference type="ChEBI" id="CHEBI:43474"/>
        <dbReference type="ChEBI" id="CHEBI:456216"/>
        <dbReference type="EC" id="3.6.4.13"/>
    </reaction>
</comment>
<comment type="subcellular location">
    <subcellularLocation>
        <location evidence="5 6">Cytoplasm</location>
    </subcellularLocation>
    <subcellularLocation>
        <location evidence="1">Nucleus</location>
    </subcellularLocation>
    <text evidence="1">Also detected in chromatoid bodies of round spermatids.</text>
</comment>
<comment type="tissue specificity">
    <text evidence="5 6">An mRNA component of germ plasm. Localizes to the granulo-fibrillar material (GFM) of the mitochondrial cloud in stage I oocytes. Associated, at a low level, with the periphery of mature germinal granules in later stage oocytes. Localizes to the vegetal cortex in stage II oocytes and segregates with germ plasm during early embryogenesis. In adults, expression is restricted to the ovary and, at a lower level, to spermatogonia, spermatocytes and spermatids of the testis.</text>
</comment>
<comment type="developmental stage">
    <text evidence="5">Expressed at a constant level throughout oogenesis and in the egg. Levels decrease during gastrulation and are not detectable by the end of gastrulation.</text>
</comment>
<comment type="similarity">
    <text evidence="2">Belongs to the DEAD box helicase family.</text>
</comment>
<accession>Q9DGP9</accession>
<feature type="chain" id="PRO_0000253934" description="ATP-dependent RNA helicase DDX25">
    <location>
        <begin position="1"/>
        <end position="483"/>
    </location>
</feature>
<feature type="domain" description="Helicase ATP-binding" evidence="3">
    <location>
        <begin position="130"/>
        <end position="300"/>
    </location>
</feature>
<feature type="domain" description="Helicase C-terminal" evidence="4">
    <location>
        <begin position="311"/>
        <end position="478"/>
    </location>
</feature>
<feature type="short sequence motif" description="Q motif" evidence="2">
    <location>
        <begin position="97"/>
        <end position="125"/>
    </location>
</feature>
<feature type="short sequence motif" description="DEAD box" evidence="2">
    <location>
        <begin position="247"/>
        <end position="250"/>
    </location>
</feature>
<feature type="binding site" evidence="3">
    <location>
        <begin position="143"/>
        <end position="150"/>
    </location>
    <ligand>
        <name>ATP</name>
        <dbReference type="ChEBI" id="CHEBI:30616"/>
    </ligand>
</feature>
<sequence length="483" mass="54545">MAAKFLPRFWRSGSQAELLDFQNNNVVAEGKLDFEHGTLKGKSGRYGDDEEDVRRGHIEDLANHSLLNKLLRRTLVDSPHNVEVLQRDPTSPLFSVKSFEELHLKNELLRGIYAMGFNRPSKIQENALPMMLADPPQNLIAQSQSGTGKTAAFVLAMLSRVDANKKYPQCICLSPTFELALQTGKVVEEMGKFCAGIEVIYALRGNRPGKGSRLEAQIVIGTPGTVLDWCFKLRLITVENISVFVLDEADVMINVQGHSDHSVRVKRSMPKSCQMLLFSATFEDSVWAFAERIVPDPNIIKLKKEELTLKNIQQFYDQCENKEQKYSALCNLYGVITIAQAIVFCQTRKIASWLSQKLSDDGHQVALLSGELPVYDRADMIQRFREGREKVLVTTNVCARGIDVEQVSIVVNFDLPVNVDGSVDFETYLHRIGRTGRFGKKGIAVSLIENFFVYMLKEIEDHFNTKITKLNSMDMDEMGKIWK</sequence>